<organism>
    <name type="scientific">Salmonella typhimurium (strain LT2 / SGSC1412 / ATCC 700720)</name>
    <dbReference type="NCBI Taxonomy" id="99287"/>
    <lineage>
        <taxon>Bacteria</taxon>
        <taxon>Pseudomonadati</taxon>
        <taxon>Pseudomonadota</taxon>
        <taxon>Gammaproteobacteria</taxon>
        <taxon>Enterobacterales</taxon>
        <taxon>Enterobacteriaceae</taxon>
        <taxon>Salmonella</taxon>
    </lineage>
</organism>
<sequence>MKLEQQLRQLSFSGLAAALLLMVVPQQAFAMHIMEGFLPPVWALAWWLLFLPCLWYGLVRLRRIVQEDNHQKVLLALCGAFIFVLSALKIPSVTGSCSHPTGVGLAVILFGPGVVAILGAVVLLFQALLLAHGGLTTLGANGMSMAVIGPVVGYLVWKMACRAGLRRDVAVFLCAMLADLATYFVTSVQLGVAFPDPHAGATGSVVKFMGIFCLTQIPVAIAEGLLTVMIYDQLTKRQVITVQGH</sequence>
<keyword id="KW-0997">Cell inner membrane</keyword>
<keyword id="KW-1003">Cell membrane</keyword>
<keyword id="KW-0169">Cobalamin biosynthesis</keyword>
<keyword id="KW-0170">Cobalt</keyword>
<keyword id="KW-0171">Cobalt transport</keyword>
<keyword id="KW-0406">Ion transport</keyword>
<keyword id="KW-0472">Membrane</keyword>
<keyword id="KW-1185">Reference proteome</keyword>
<keyword id="KW-0732">Signal</keyword>
<keyword id="KW-0812">Transmembrane</keyword>
<keyword id="KW-1133">Transmembrane helix</keyword>
<keyword id="KW-0813">Transport</keyword>
<gene>
    <name type="primary">cbiM</name>
    <name type="ordered locus">STM2023</name>
</gene>
<comment type="function">
    <text evidence="2">Part of the energy-coupling factor (ECF) transporter complex CbiMNOQ involved in cobalt import. The complex confers cobalt uptake upon expression in E.coli; can also transport nickel with a very low affinity.</text>
</comment>
<comment type="pathway">
    <text>Cofactor biosynthesis; adenosylcobalamin biosynthesis.</text>
</comment>
<comment type="subunit">
    <text evidence="2">Forms an energy-coupling factor (ECF) transporter complex composed of an ATP-binding protein (A component, CbiO), a transmembrane protein (T component, CbiQ) and 2 possible substrate-capture proteins (S components, CbiM and CbiN) of unknown stoichimetry. Expression of just CbiMN in E.coli confers some cobalt uptake.</text>
</comment>
<comment type="subcellular location">
    <subcellularLocation>
        <location evidence="3">Cell inner membrane</location>
        <topology evidence="3">Multi-pass membrane protein</topology>
    </subcellularLocation>
</comment>
<comment type="similarity">
    <text evidence="3">Belongs to the CbiM family.</text>
</comment>
<proteinExistence type="evidence at protein level"/>
<feature type="signal peptide" evidence="1">
    <location>
        <begin position="1"/>
        <end position="30"/>
    </location>
</feature>
<feature type="chain" id="PRO_0000089375" description="Cobalt transport protein CbiM">
    <location>
        <begin position="31"/>
        <end position="245"/>
    </location>
</feature>
<feature type="transmembrane region" description="Helical" evidence="1">
    <location>
        <begin position="36"/>
        <end position="56"/>
    </location>
</feature>
<feature type="transmembrane region" description="Helical" evidence="1">
    <location>
        <begin position="73"/>
        <end position="93"/>
    </location>
</feature>
<feature type="transmembrane region" description="Helical" evidence="1">
    <location>
        <begin position="105"/>
        <end position="125"/>
    </location>
</feature>
<feature type="transmembrane region" description="Helical" evidence="1">
    <location>
        <begin position="137"/>
        <end position="157"/>
    </location>
</feature>
<feature type="transmembrane region" description="Helical" evidence="1">
    <location>
        <begin position="169"/>
        <end position="189"/>
    </location>
</feature>
<feature type="transmembrane region" description="Helical" evidence="1">
    <location>
        <begin position="210"/>
        <end position="230"/>
    </location>
</feature>
<reference key="1">
    <citation type="journal article" date="1993" name="J. Bacteriol.">
        <title>Characterization of the cobalamin (vitamin B12) biosynthetic genes of Salmonella typhimurium.</title>
        <authorList>
            <person name="Roth J.R."/>
            <person name="Lawrence J.G."/>
            <person name="Rubenfield M."/>
            <person name="Kieffer-Higgins S."/>
            <person name="Church G.M."/>
        </authorList>
    </citation>
    <scope>NUCLEOTIDE SEQUENCE [GENOMIC DNA]</scope>
    <source>
        <strain>LT2</strain>
    </source>
</reference>
<reference key="2">
    <citation type="journal article" date="2001" name="Nature">
        <title>Complete genome sequence of Salmonella enterica serovar Typhimurium LT2.</title>
        <authorList>
            <person name="McClelland M."/>
            <person name="Sanderson K.E."/>
            <person name="Spieth J."/>
            <person name="Clifton S.W."/>
            <person name="Latreille P."/>
            <person name="Courtney L."/>
            <person name="Porwollik S."/>
            <person name="Ali J."/>
            <person name="Dante M."/>
            <person name="Du F."/>
            <person name="Hou S."/>
            <person name="Layman D."/>
            <person name="Leonard S."/>
            <person name="Nguyen C."/>
            <person name="Scott K."/>
            <person name="Holmes A."/>
            <person name="Grewal N."/>
            <person name="Mulvaney E."/>
            <person name="Ryan E."/>
            <person name="Sun H."/>
            <person name="Florea L."/>
            <person name="Miller W."/>
            <person name="Stoneking T."/>
            <person name="Nhan M."/>
            <person name="Waterston R."/>
            <person name="Wilson R.K."/>
        </authorList>
    </citation>
    <scope>NUCLEOTIDE SEQUENCE [LARGE SCALE GENOMIC DNA]</scope>
    <source>
        <strain>LT2 / SGSC1412 / ATCC 700720</strain>
    </source>
</reference>
<reference key="3">
    <citation type="journal article" date="2006" name="J. Bacteriol.">
        <title>Comparative and functional genomic analysis of prokaryotic nickel and cobalt uptake transporters: evidence for a novel group of ATP-binding cassette transporters.</title>
        <authorList>
            <person name="Rodionov D.A."/>
            <person name="Hebbeln P."/>
            <person name="Gelfand M.S."/>
            <person name="Eitinger T."/>
        </authorList>
    </citation>
    <scope>FUNCTION IN COBALT TRANSPORT</scope>
    <scope>SUBSTRATES</scope>
    <scope>SUBUNIT</scope>
    <scope>EXPRESSION IN E.COLI</scope>
    <source>
        <strain>LT2 / SGSC1412 / ATCC 700720</strain>
    </source>
</reference>
<dbReference type="EMBL" id="L12006">
    <property type="protein sequence ID" value="AAA27264.1"/>
    <property type="molecule type" value="Genomic_DNA"/>
</dbReference>
<dbReference type="EMBL" id="AE006468">
    <property type="protein sequence ID" value="AAL20927.1"/>
    <property type="molecule type" value="Genomic_DNA"/>
</dbReference>
<dbReference type="RefSeq" id="NP_460968.3">
    <property type="nucleotide sequence ID" value="NC_003197.2"/>
</dbReference>
<dbReference type="RefSeq" id="WP_000764336.1">
    <property type="nucleotide sequence ID" value="NC_003197.2"/>
</dbReference>
<dbReference type="SMR" id="Q05594"/>
<dbReference type="STRING" id="99287.STM2023"/>
<dbReference type="TCDB" id="3.A.1.23.6">
    <property type="family name" value="the atp-binding cassette (abc) superfamily"/>
</dbReference>
<dbReference type="PaxDb" id="99287-STM2023"/>
<dbReference type="GeneID" id="1253544"/>
<dbReference type="KEGG" id="stm:STM2023"/>
<dbReference type="HOGENOM" id="CLU_052508_3_0_6"/>
<dbReference type="PhylomeDB" id="Q05594"/>
<dbReference type="BioCyc" id="SENT99287:STM2023-MONOMER"/>
<dbReference type="UniPathway" id="UPA00148"/>
<dbReference type="Proteomes" id="UP000001014">
    <property type="component" value="Chromosome"/>
</dbReference>
<dbReference type="GO" id="GO:0043190">
    <property type="term" value="C:ATP-binding cassette (ABC) transporter complex"/>
    <property type="evidence" value="ECO:0000314"/>
    <property type="project" value="UniProtKB"/>
</dbReference>
<dbReference type="GO" id="GO:0015087">
    <property type="term" value="F:cobalt ion transmembrane transporter activity"/>
    <property type="evidence" value="ECO:0007669"/>
    <property type="project" value="UniProtKB-UniRule"/>
</dbReference>
<dbReference type="GO" id="GO:0009236">
    <property type="term" value="P:cobalamin biosynthetic process"/>
    <property type="evidence" value="ECO:0007669"/>
    <property type="project" value="UniProtKB-UniRule"/>
</dbReference>
<dbReference type="GO" id="GO:0006824">
    <property type="term" value="P:cobalt ion transport"/>
    <property type="evidence" value="ECO:0000314"/>
    <property type="project" value="UniProtKB"/>
</dbReference>
<dbReference type="FunFam" id="1.10.1760.20:FF:000001">
    <property type="entry name" value="Cobalt transport protein CbiM"/>
    <property type="match status" value="1"/>
</dbReference>
<dbReference type="Gene3D" id="1.10.1760.20">
    <property type="match status" value="1"/>
</dbReference>
<dbReference type="HAMAP" id="MF_01462">
    <property type="entry name" value="CbiM"/>
    <property type="match status" value="1"/>
</dbReference>
<dbReference type="InterPro" id="IPR018024">
    <property type="entry name" value="CbiM"/>
</dbReference>
<dbReference type="InterPro" id="IPR002751">
    <property type="entry name" value="CbiM/NikMN"/>
</dbReference>
<dbReference type="NCBIfam" id="TIGR00123">
    <property type="entry name" value="cbiM"/>
    <property type="match status" value="1"/>
</dbReference>
<dbReference type="NCBIfam" id="NF006184">
    <property type="entry name" value="PRK08319.1"/>
    <property type="match status" value="1"/>
</dbReference>
<dbReference type="PANTHER" id="PTHR43627">
    <property type="match status" value="1"/>
</dbReference>
<dbReference type="PANTHER" id="PTHR43627:SF1">
    <property type="entry name" value="COBALT TRANSPORT PROTEIN CBIM"/>
    <property type="match status" value="1"/>
</dbReference>
<dbReference type="Pfam" id="PF01891">
    <property type="entry name" value="CbiM"/>
    <property type="match status" value="1"/>
</dbReference>
<evidence type="ECO:0000255" key="1"/>
<evidence type="ECO:0000269" key="2">
    <source>
    </source>
</evidence>
<evidence type="ECO:0000305" key="3"/>
<name>CBIM_SALTY</name>
<protein>
    <recommendedName>
        <fullName>Cobalt transport protein CbiM</fullName>
    </recommendedName>
    <alternativeName>
        <fullName>Energy-coupling factor transporter probable substrate-capture protein CbiM</fullName>
        <shortName>ECF transporter S component CbiM</shortName>
    </alternativeName>
</protein>
<accession>Q05594</accession>